<keyword id="KW-0010">Activator</keyword>
<keyword id="KW-0238">DNA-binding</keyword>
<keyword id="KW-0479">Metal-binding</keyword>
<keyword id="KW-0539">Nucleus</keyword>
<keyword id="KW-1185">Reference proteome</keyword>
<keyword id="KW-0677">Repeat</keyword>
<keyword id="KW-0804">Transcription</keyword>
<keyword id="KW-0805">Transcription regulation</keyword>
<keyword id="KW-0862">Zinc</keyword>
<keyword id="KW-0863">Zinc-finger</keyword>
<proteinExistence type="evidence at transcript level"/>
<comment type="function">
    <text evidence="3">Transcriptional activator that binds 5'-GATA-3'-containing motifs within gene promoters. Regulates cardiac-specific transcription during embryogenesis and thereby cardiogenesis.</text>
</comment>
<comment type="subcellular location">
    <subcellularLocation>
        <location>Nucleus</location>
    </subcellularLocation>
</comment>
<comment type="tissue specificity">
    <text evidence="3">In embryos, expressed in the presumptive heart mesoderm. In adults, widely distributed but predominant in the heart.</text>
</comment>
<comment type="developmental stage">
    <text evidence="3">Expressed in embryos from the early gastrula stage (stage 10.5). Peak expression occurs at neurula stages (stages 11 to 17), with progressive reduction from the mid tailbud stage (stage 24) onwards. Still expressed in swimming tadpoles (stage 40) and in adults.</text>
</comment>
<comment type="sequence caution" evidence="4">
    <conflict type="erroneous initiation">
        <sequence resource="EMBL-CDS" id="AAH82349"/>
    </conflict>
    <text>Extended N-terminus.</text>
</comment>
<dbReference type="EMBL" id="Y08865">
    <property type="protein sequence ID" value="CAA70088.1"/>
    <property type="molecule type" value="mRNA"/>
</dbReference>
<dbReference type="EMBL" id="BC082349">
    <property type="protein sequence ID" value="AAH82349.1"/>
    <property type="status" value="ALT_INIT"/>
    <property type="molecule type" value="mRNA"/>
</dbReference>
<dbReference type="RefSeq" id="NP_001083725.1">
    <property type="nucleotide sequence ID" value="NM_001090256.1"/>
</dbReference>
<dbReference type="SMR" id="P70005"/>
<dbReference type="GeneID" id="399082"/>
<dbReference type="KEGG" id="xla:399082"/>
<dbReference type="AGR" id="Xenbase:XB-GENE-865113"/>
<dbReference type="CTD" id="399082"/>
<dbReference type="Xenbase" id="XB-GENE-865113">
    <property type="gene designation" value="gata6.L"/>
</dbReference>
<dbReference type="OrthoDB" id="515401at2759"/>
<dbReference type="Proteomes" id="UP000186698">
    <property type="component" value="Chromosome 6L"/>
</dbReference>
<dbReference type="Bgee" id="399082">
    <property type="expression patterns" value="Expressed in stomach and 12 other cell types or tissues"/>
</dbReference>
<dbReference type="GO" id="GO:0005634">
    <property type="term" value="C:nucleus"/>
    <property type="evidence" value="ECO:0000318"/>
    <property type="project" value="GO_Central"/>
</dbReference>
<dbReference type="GO" id="GO:0000981">
    <property type="term" value="F:DNA-binding transcription factor activity, RNA polymerase II-specific"/>
    <property type="evidence" value="ECO:0000318"/>
    <property type="project" value="GO_Central"/>
</dbReference>
<dbReference type="GO" id="GO:0000978">
    <property type="term" value="F:RNA polymerase II cis-regulatory region sequence-specific DNA binding"/>
    <property type="evidence" value="ECO:0000318"/>
    <property type="project" value="GO_Central"/>
</dbReference>
<dbReference type="GO" id="GO:0043565">
    <property type="term" value="F:sequence-specific DNA binding"/>
    <property type="evidence" value="ECO:0000314"/>
    <property type="project" value="UniProtKB"/>
</dbReference>
<dbReference type="GO" id="GO:0008270">
    <property type="term" value="F:zinc ion binding"/>
    <property type="evidence" value="ECO:0007669"/>
    <property type="project" value="UniProtKB-KW"/>
</dbReference>
<dbReference type="GO" id="GO:0060070">
    <property type="term" value="P:canonical Wnt signaling pathway"/>
    <property type="evidence" value="ECO:0000315"/>
    <property type="project" value="BHF-UCL"/>
</dbReference>
<dbReference type="GO" id="GO:0048738">
    <property type="term" value="P:cardiac muscle tissue development"/>
    <property type="evidence" value="ECO:0000315"/>
    <property type="project" value="BHF-UCL"/>
</dbReference>
<dbReference type="GO" id="GO:0035051">
    <property type="term" value="P:cardiocyte differentiation"/>
    <property type="evidence" value="ECO:0000315"/>
    <property type="project" value="UniProtKB"/>
</dbReference>
<dbReference type="GO" id="GO:0045165">
    <property type="term" value="P:cell fate commitment"/>
    <property type="evidence" value="ECO:0000318"/>
    <property type="project" value="GO_Central"/>
</dbReference>
<dbReference type="GO" id="GO:0030855">
    <property type="term" value="P:epithelial cell differentiation"/>
    <property type="evidence" value="ECO:0000318"/>
    <property type="project" value="GO_Central"/>
</dbReference>
<dbReference type="GO" id="GO:0000122">
    <property type="term" value="P:negative regulation of transcription by RNA polymerase II"/>
    <property type="evidence" value="ECO:0000318"/>
    <property type="project" value="GO_Central"/>
</dbReference>
<dbReference type="GO" id="GO:0045893">
    <property type="term" value="P:positive regulation of DNA-templated transcription"/>
    <property type="evidence" value="ECO:0000314"/>
    <property type="project" value="UniProtKB"/>
</dbReference>
<dbReference type="GO" id="GO:0045944">
    <property type="term" value="P:positive regulation of transcription by RNA polymerase II"/>
    <property type="evidence" value="ECO:0000318"/>
    <property type="project" value="GO_Central"/>
</dbReference>
<dbReference type="CDD" id="cd00202">
    <property type="entry name" value="ZnF_GATA"/>
    <property type="match status" value="2"/>
</dbReference>
<dbReference type="FunFam" id="3.30.50.10:FF:000001">
    <property type="entry name" value="GATA transcription factor (GATAd)"/>
    <property type="match status" value="1"/>
</dbReference>
<dbReference type="FunFam" id="3.30.50.10:FF:000032">
    <property type="entry name" value="Transcription factor GATA-3"/>
    <property type="match status" value="1"/>
</dbReference>
<dbReference type="Gene3D" id="3.30.50.10">
    <property type="entry name" value="Erythroid Transcription Factor GATA-1, subunit A"/>
    <property type="match status" value="2"/>
</dbReference>
<dbReference type="InterPro" id="IPR008013">
    <property type="entry name" value="GATA_N"/>
</dbReference>
<dbReference type="InterPro" id="IPR016375">
    <property type="entry name" value="TF_GATA_4/5/6"/>
</dbReference>
<dbReference type="InterPro" id="IPR039355">
    <property type="entry name" value="Transcription_factor_GATA"/>
</dbReference>
<dbReference type="InterPro" id="IPR000679">
    <property type="entry name" value="Znf_GATA"/>
</dbReference>
<dbReference type="InterPro" id="IPR013088">
    <property type="entry name" value="Znf_NHR/GATA"/>
</dbReference>
<dbReference type="PANTHER" id="PTHR10071">
    <property type="entry name" value="TRANSCRIPTION FACTOR GATA FAMILY MEMBER"/>
    <property type="match status" value="1"/>
</dbReference>
<dbReference type="PANTHER" id="PTHR10071:SF23">
    <property type="entry name" value="TRANSCRIPTION FACTOR GATA-6"/>
    <property type="match status" value="1"/>
</dbReference>
<dbReference type="Pfam" id="PF00320">
    <property type="entry name" value="GATA"/>
    <property type="match status" value="2"/>
</dbReference>
<dbReference type="Pfam" id="PF05349">
    <property type="entry name" value="GATA-N"/>
    <property type="match status" value="1"/>
</dbReference>
<dbReference type="PIRSF" id="PIRSF003028">
    <property type="entry name" value="TF_GATA_4/5/6"/>
    <property type="match status" value="1"/>
</dbReference>
<dbReference type="PRINTS" id="PR00619">
    <property type="entry name" value="GATAZNFINGER"/>
</dbReference>
<dbReference type="SMART" id="SM00401">
    <property type="entry name" value="ZnF_GATA"/>
    <property type="match status" value="2"/>
</dbReference>
<dbReference type="SUPFAM" id="SSF57716">
    <property type="entry name" value="Glucocorticoid receptor-like (DNA-binding domain)"/>
    <property type="match status" value="2"/>
</dbReference>
<dbReference type="PROSITE" id="PS00344">
    <property type="entry name" value="GATA_ZN_FINGER_1"/>
    <property type="match status" value="2"/>
</dbReference>
<dbReference type="PROSITE" id="PS50114">
    <property type="entry name" value="GATA_ZN_FINGER_2"/>
    <property type="match status" value="2"/>
</dbReference>
<evidence type="ECO:0000255" key="1">
    <source>
        <dbReference type="PROSITE-ProRule" id="PRU00094"/>
    </source>
</evidence>
<evidence type="ECO:0000256" key="2">
    <source>
        <dbReference type="SAM" id="MobiDB-lite"/>
    </source>
</evidence>
<evidence type="ECO:0000269" key="3">
    <source>
    </source>
</evidence>
<evidence type="ECO:0000305" key="4"/>
<protein>
    <recommendedName>
        <fullName>GATA-binding factor 6-B</fullName>
    </recommendedName>
    <alternativeName>
        <fullName>Transcription factor xGATA-6b</fullName>
    </alternativeName>
</protein>
<sequence>MYQTLTITAAQGPLGYDPSPGTFMHSAASSPVYVPTSRVGSMLTSISYLQGTGASQGTHSVNSHWSQATSESSSYSSSSPHPSSRYHYSPSPPMANGSTRDTGYSSSLAVSGRDQYAPLARPLNGSYGSPYTPYMTPQLTSAWPAGPFDNTMLHSLQSRGAPISVRGAPGDVLDELPESRECVNCGSVQTPLWRRDGTGHYLCNACGLYSKMNGLSRPLIKPQKRVPSSRRIGLACANCHTTTTTLWRRNTEGEPVCNACGLYMKLHGVPRPLAMKKEGIQTRKRKPKNLNKSKSSSSNGNSSHHITMTPTSTTSSTNSDDCIKNGSPSQNTAPVVTSSLMSAQQTGSASPDSNILKYTGQDGLYSAVSLSSASEVAASVRQDSWCALALA</sequence>
<organism>
    <name type="scientific">Xenopus laevis</name>
    <name type="common">African clawed frog</name>
    <dbReference type="NCBI Taxonomy" id="8355"/>
    <lineage>
        <taxon>Eukaryota</taxon>
        <taxon>Metazoa</taxon>
        <taxon>Chordata</taxon>
        <taxon>Craniata</taxon>
        <taxon>Vertebrata</taxon>
        <taxon>Euteleostomi</taxon>
        <taxon>Amphibia</taxon>
        <taxon>Batrachia</taxon>
        <taxon>Anura</taxon>
        <taxon>Pipoidea</taxon>
        <taxon>Pipidae</taxon>
        <taxon>Xenopodinae</taxon>
        <taxon>Xenopus</taxon>
        <taxon>Xenopus</taxon>
    </lineage>
</organism>
<gene>
    <name type="primary">gata6-b</name>
    <name type="synonym">gata6</name>
    <name type="synonym">gata6b</name>
</gene>
<feature type="chain" id="PRO_0000083429" description="GATA-binding factor 6-B">
    <location>
        <begin position="1"/>
        <end position="391"/>
    </location>
</feature>
<feature type="zinc finger region" description="GATA-type 1" evidence="1">
    <location>
        <begin position="182"/>
        <end position="206"/>
    </location>
</feature>
<feature type="zinc finger region" description="GATA-type 2" evidence="1">
    <location>
        <begin position="236"/>
        <end position="260"/>
    </location>
</feature>
<feature type="region of interest" description="Disordered" evidence="2">
    <location>
        <begin position="57"/>
        <end position="107"/>
    </location>
</feature>
<feature type="region of interest" description="Disordered" evidence="2">
    <location>
        <begin position="277"/>
        <end position="334"/>
    </location>
</feature>
<feature type="compositionally biased region" description="Polar residues" evidence="2">
    <location>
        <begin position="57"/>
        <end position="69"/>
    </location>
</feature>
<feature type="compositionally biased region" description="Low complexity" evidence="2">
    <location>
        <begin position="70"/>
        <end position="89"/>
    </location>
</feature>
<feature type="compositionally biased region" description="Polar residues" evidence="2">
    <location>
        <begin position="96"/>
        <end position="107"/>
    </location>
</feature>
<feature type="compositionally biased region" description="Basic residues" evidence="2">
    <location>
        <begin position="282"/>
        <end position="291"/>
    </location>
</feature>
<feature type="compositionally biased region" description="Low complexity" evidence="2">
    <location>
        <begin position="292"/>
        <end position="319"/>
    </location>
</feature>
<reference key="1">
    <citation type="journal article" date="1997" name="EMBO J.">
        <title>Over-expression of GATA-6 in Xenopus embryos blocks differentiation of heart precursors.</title>
        <authorList>
            <person name="Gove C.D."/>
            <person name="Walmsley M."/>
            <person name="Nijjar S."/>
            <person name="Bertwistle D."/>
            <person name="Guille M."/>
            <person name="Partington G."/>
            <person name="Bomford A."/>
            <person name="Patient R."/>
        </authorList>
    </citation>
    <scope>NUCLEOTIDE SEQUENCE [MRNA]</scope>
    <scope>FUNCTION</scope>
    <scope>TISSUE SPECIFICITY</scope>
    <scope>DEVELOPMENTAL STAGE</scope>
    <source>
        <tissue>Liver</tissue>
    </source>
</reference>
<reference key="2">
    <citation type="submission" date="2004-09" db="EMBL/GenBank/DDBJ databases">
        <authorList>
            <consortium name="NIH - Xenopus Gene Collection (XGC) project"/>
        </authorList>
    </citation>
    <scope>NUCLEOTIDE SEQUENCE [LARGE SCALE MRNA]</scope>
    <source>
        <tissue>Gastrula</tissue>
    </source>
</reference>
<name>GAT6B_XENLA</name>
<accession>P70005</accession>
<accession>Q641I8</accession>